<feature type="signal peptide" evidence="2">
    <location>
        <begin position="1"/>
        <end position="19"/>
    </location>
</feature>
<feature type="propeptide" id="PRO_0000406400" evidence="1">
    <location>
        <begin position="20"/>
        <end position="117"/>
    </location>
</feature>
<feature type="chain" id="PRO_0000406401" description="Subtilisin-like protease 11">
    <location>
        <begin position="118"/>
        <end position="400"/>
    </location>
</feature>
<feature type="domain" description="Inhibitor I9" evidence="2">
    <location>
        <begin position="35"/>
        <end position="116"/>
    </location>
</feature>
<feature type="domain" description="Peptidase S8" evidence="3">
    <location>
        <begin position="127"/>
        <end position="400"/>
    </location>
</feature>
<feature type="active site" description="Charge relay system" evidence="3">
    <location>
        <position position="159"/>
    </location>
</feature>
<feature type="active site" description="Charge relay system" evidence="3">
    <location>
        <position position="191"/>
    </location>
</feature>
<feature type="active site" description="Charge relay system" evidence="3">
    <location>
        <position position="346"/>
    </location>
</feature>
<feature type="glycosylation site" description="N-linked (GlcNAc...) asparagine" evidence="2">
    <location>
        <position position="138"/>
    </location>
</feature>
<feature type="glycosylation site" description="N-linked (GlcNAc...) asparagine" evidence="2">
    <location>
        <position position="252"/>
    </location>
</feature>
<feature type="glycosylation site" description="N-linked (GlcNAc...) asparagine" evidence="2">
    <location>
        <position position="336"/>
    </location>
</feature>
<feature type="glycosylation site" description="N-linked (GlcNAc...) asparagine" evidence="2">
    <location>
        <position position="337"/>
    </location>
</feature>
<feature type="glycosylation site" description="N-linked (GlcNAc...) asparagine" evidence="2">
    <location>
        <position position="388"/>
    </location>
</feature>
<feature type="glycosylation site" description="N-linked (GlcNAc...) asparagine" evidence="2">
    <location>
        <position position="396"/>
    </location>
</feature>
<keyword id="KW-0325">Glycoprotein</keyword>
<keyword id="KW-0378">Hydrolase</keyword>
<keyword id="KW-0645">Protease</keyword>
<keyword id="KW-1185">Reference proteome</keyword>
<keyword id="KW-0964">Secreted</keyword>
<keyword id="KW-0720">Serine protease</keyword>
<keyword id="KW-0732">Signal</keyword>
<keyword id="KW-0843">Virulence</keyword>
<keyword id="KW-0865">Zymogen</keyword>
<comment type="function">
    <text evidence="1">Secreted subtilisin-like serine protease with keratinolytic activity that contributes to pathogenicity.</text>
</comment>
<comment type="subcellular location">
    <subcellularLocation>
        <location evidence="1">Secreted</location>
    </subcellularLocation>
</comment>
<comment type="similarity">
    <text evidence="4">Belongs to the peptidase S8 family.</text>
</comment>
<evidence type="ECO:0000250" key="1"/>
<evidence type="ECO:0000255" key="2"/>
<evidence type="ECO:0000255" key="3">
    <source>
        <dbReference type="PROSITE-ProRule" id="PRU01240"/>
    </source>
</evidence>
<evidence type="ECO:0000305" key="4"/>
<gene>
    <name type="primary">SUB11</name>
    <name type="ORF">MGYG_08213</name>
</gene>
<dbReference type="EC" id="3.4.21.-"/>
<dbReference type="EMBL" id="DS989829">
    <property type="protein sequence ID" value="EFR05199.1"/>
    <property type="molecule type" value="Genomic_DNA"/>
</dbReference>
<dbReference type="RefSeq" id="XP_003170034.1">
    <property type="nucleotide sequence ID" value="XM_003169986.1"/>
</dbReference>
<dbReference type="SMR" id="E4V5C5"/>
<dbReference type="STRING" id="535722.E4V5C5"/>
<dbReference type="GlyCosmos" id="E4V5C5">
    <property type="glycosylation" value="6 sites, No reported glycans"/>
</dbReference>
<dbReference type="GeneID" id="10025269"/>
<dbReference type="VEuPathDB" id="FungiDB:MGYG_08213"/>
<dbReference type="eggNOG" id="KOG1153">
    <property type="taxonomic scope" value="Eukaryota"/>
</dbReference>
<dbReference type="HOGENOM" id="CLU_011263_1_3_1"/>
<dbReference type="InParanoid" id="E4V5C5"/>
<dbReference type="OMA" id="GWHAYSG"/>
<dbReference type="OrthoDB" id="206201at2759"/>
<dbReference type="Proteomes" id="UP000002669">
    <property type="component" value="Unassembled WGS sequence"/>
</dbReference>
<dbReference type="GO" id="GO:0005576">
    <property type="term" value="C:extracellular region"/>
    <property type="evidence" value="ECO:0007669"/>
    <property type="project" value="UniProtKB-SubCell"/>
</dbReference>
<dbReference type="GO" id="GO:0004252">
    <property type="term" value="F:serine-type endopeptidase activity"/>
    <property type="evidence" value="ECO:0007669"/>
    <property type="project" value="InterPro"/>
</dbReference>
<dbReference type="GO" id="GO:0006508">
    <property type="term" value="P:proteolysis"/>
    <property type="evidence" value="ECO:0007669"/>
    <property type="project" value="UniProtKB-KW"/>
</dbReference>
<dbReference type="CDD" id="cd04077">
    <property type="entry name" value="Peptidases_S8_PCSK9_ProteinaseK_like"/>
    <property type="match status" value="1"/>
</dbReference>
<dbReference type="FunFam" id="3.40.50.200:FF:000014">
    <property type="entry name" value="Proteinase K"/>
    <property type="match status" value="1"/>
</dbReference>
<dbReference type="Gene3D" id="3.30.70.80">
    <property type="entry name" value="Peptidase S8 propeptide/proteinase inhibitor I9"/>
    <property type="match status" value="1"/>
</dbReference>
<dbReference type="Gene3D" id="3.40.50.200">
    <property type="entry name" value="Peptidase S8/S53 domain"/>
    <property type="match status" value="1"/>
</dbReference>
<dbReference type="InterPro" id="IPR034193">
    <property type="entry name" value="PCSK9_ProteinaseK-like"/>
</dbReference>
<dbReference type="InterPro" id="IPR000209">
    <property type="entry name" value="Peptidase_S8/S53_dom"/>
</dbReference>
<dbReference type="InterPro" id="IPR036852">
    <property type="entry name" value="Peptidase_S8/S53_dom_sf"/>
</dbReference>
<dbReference type="InterPro" id="IPR050131">
    <property type="entry name" value="Peptidase_S8_subtilisin-like"/>
</dbReference>
<dbReference type="InterPro" id="IPR015500">
    <property type="entry name" value="Peptidase_S8_subtilisin-rel"/>
</dbReference>
<dbReference type="InterPro" id="IPR010259">
    <property type="entry name" value="S8pro/Inhibitor_I9"/>
</dbReference>
<dbReference type="InterPro" id="IPR037045">
    <property type="entry name" value="S8pro/Inhibitor_I9_sf"/>
</dbReference>
<dbReference type="PANTHER" id="PTHR43806:SF11">
    <property type="entry name" value="CEREVISIN-RELATED"/>
    <property type="match status" value="1"/>
</dbReference>
<dbReference type="PANTHER" id="PTHR43806">
    <property type="entry name" value="PEPTIDASE S8"/>
    <property type="match status" value="1"/>
</dbReference>
<dbReference type="Pfam" id="PF05922">
    <property type="entry name" value="Inhibitor_I9"/>
    <property type="match status" value="1"/>
</dbReference>
<dbReference type="Pfam" id="PF00082">
    <property type="entry name" value="Peptidase_S8"/>
    <property type="match status" value="1"/>
</dbReference>
<dbReference type="PRINTS" id="PR00723">
    <property type="entry name" value="SUBTILISIN"/>
</dbReference>
<dbReference type="SUPFAM" id="SSF54897">
    <property type="entry name" value="Protease propeptides/inhibitors"/>
    <property type="match status" value="1"/>
</dbReference>
<dbReference type="SUPFAM" id="SSF52743">
    <property type="entry name" value="Subtilisin-like"/>
    <property type="match status" value="1"/>
</dbReference>
<dbReference type="PROSITE" id="PS51892">
    <property type="entry name" value="SUBTILASE"/>
    <property type="match status" value="1"/>
</dbReference>
<accession>E4V5C5</accession>
<reference key="1">
    <citation type="journal article" date="2012" name="MBio">
        <title>Comparative genome analysis of Trichophyton rubrum and related dermatophytes reveals candidate genes involved in infection.</title>
        <authorList>
            <person name="Martinez D.A."/>
            <person name="Oliver B.G."/>
            <person name="Graeser Y."/>
            <person name="Goldberg J.M."/>
            <person name="Li W."/>
            <person name="Martinez-Rossi N.M."/>
            <person name="Monod M."/>
            <person name="Shelest E."/>
            <person name="Barton R.C."/>
            <person name="Birch E."/>
            <person name="Brakhage A.A."/>
            <person name="Chen Z."/>
            <person name="Gurr S.J."/>
            <person name="Heiman D."/>
            <person name="Heitman J."/>
            <person name="Kosti I."/>
            <person name="Rossi A."/>
            <person name="Saif S."/>
            <person name="Samalova M."/>
            <person name="Saunders C.W."/>
            <person name="Shea T."/>
            <person name="Summerbell R.C."/>
            <person name="Xu J."/>
            <person name="Young S."/>
            <person name="Zeng Q."/>
            <person name="Birren B.W."/>
            <person name="Cuomo C.A."/>
            <person name="White T.C."/>
        </authorList>
    </citation>
    <scope>NUCLEOTIDE SEQUENCE [LARGE SCALE GENOMIC DNA]</scope>
    <source>
        <strain>ATCC MYA-4604 / CBS 118893</strain>
    </source>
</reference>
<sequence>MGLFTVVFTAIAALSAVDAAELLRSPNSKDIVPNSYLVVMKDSVSSADLDSHVSWVTDLHSESITKPGVKNLDGFKHSYKINGWHAYSGSFDSETLASILDNDQVDFVEHDRYVYIDGLVTQKDAPSWGLGRVSHRMNGTRDYVYDETAGSGITFYGVDTGIDIRHPDFGGRAVWGTNVVSGTGDNDRHGHGTHTAATATGTKYGLAKKANVVAVKALNDHGAGLWSNIMKALEWCVDDARKKNALGKAVLNLSISGGKVVAANQAITNAANAGIFVSVAAGNDNQDATNKSPASAENVCCAAASTIRDEKASISNYGSVVKLYAPGQGITSATPNNSTGVMTGTSMAAPHVGGVGATLMASKHIAPSAVCAELIKMATGAVRNPGANTTNKLLYNGSGQ</sequence>
<organism>
    <name type="scientific">Arthroderma gypseum (strain ATCC MYA-4604 / CBS 118893)</name>
    <name type="common">Microsporum gypseum</name>
    <dbReference type="NCBI Taxonomy" id="535722"/>
    <lineage>
        <taxon>Eukaryota</taxon>
        <taxon>Fungi</taxon>
        <taxon>Dikarya</taxon>
        <taxon>Ascomycota</taxon>
        <taxon>Pezizomycotina</taxon>
        <taxon>Eurotiomycetes</taxon>
        <taxon>Eurotiomycetidae</taxon>
        <taxon>Onygenales</taxon>
        <taxon>Arthrodermataceae</taxon>
        <taxon>Nannizzia</taxon>
    </lineage>
</organism>
<protein>
    <recommendedName>
        <fullName>Subtilisin-like protease 11</fullName>
        <ecNumber>3.4.21.-</ecNumber>
    </recommendedName>
</protein>
<name>SUB11_ARTGP</name>
<proteinExistence type="inferred from homology"/>